<comment type="function">
    <text evidence="1">Cell division protein that is part of the divisome complex and is recruited early to the Z-ring. Probably stimulates Z-ring formation, perhaps through the cross-linking of FtsZ protofilaments. Its function overlaps with FtsA.</text>
</comment>
<comment type="subunit">
    <text evidence="1">Homodimer. Interacts with FtsZ.</text>
</comment>
<comment type="subcellular location">
    <subcellularLocation>
        <location evidence="1">Cytoplasm</location>
    </subcellularLocation>
    <text evidence="1">Localizes to the division site, in a FtsZ-dependent manner.</text>
</comment>
<comment type="similarity">
    <text evidence="1">Belongs to the SepF family.</text>
</comment>
<name>SEPF_BACHK</name>
<protein>
    <recommendedName>
        <fullName evidence="1">Cell division protein SepF</fullName>
    </recommendedName>
</protein>
<sequence>MSWSKVKYFFFDTPEEKEAAQYSYEKEQTDMKKQQDPPEQQDVTFPKAQPKQNVVSIETAKQSSKVVLLEPRTYSEAQGIADHLKGRRAVVINLQRMSTDQAVRIVDFLSGTVYAIGGDIQKIGPKTFMCTPENVDIVGAISELFGEEEDTNIKRW</sequence>
<dbReference type="EMBL" id="AE017355">
    <property type="protein sequence ID" value="AAT61600.1"/>
    <property type="molecule type" value="Genomic_DNA"/>
</dbReference>
<dbReference type="RefSeq" id="WP_000119136.1">
    <property type="nucleotide sequence ID" value="NC_005957.1"/>
</dbReference>
<dbReference type="RefSeq" id="YP_037961.1">
    <property type="nucleotide sequence ID" value="NC_005957.1"/>
</dbReference>
<dbReference type="SMR" id="Q6HER5"/>
<dbReference type="KEGG" id="btk:BT9727_3641"/>
<dbReference type="PATRIC" id="fig|281309.8.peg.3879"/>
<dbReference type="HOGENOM" id="CLU_078499_4_1_9"/>
<dbReference type="Proteomes" id="UP000001301">
    <property type="component" value="Chromosome"/>
</dbReference>
<dbReference type="GO" id="GO:0005737">
    <property type="term" value="C:cytoplasm"/>
    <property type="evidence" value="ECO:0007669"/>
    <property type="project" value="UniProtKB-SubCell"/>
</dbReference>
<dbReference type="GO" id="GO:0000917">
    <property type="term" value="P:division septum assembly"/>
    <property type="evidence" value="ECO:0007669"/>
    <property type="project" value="UniProtKB-KW"/>
</dbReference>
<dbReference type="GO" id="GO:0043093">
    <property type="term" value="P:FtsZ-dependent cytokinesis"/>
    <property type="evidence" value="ECO:0007669"/>
    <property type="project" value="UniProtKB-UniRule"/>
</dbReference>
<dbReference type="Gene3D" id="3.30.110.150">
    <property type="entry name" value="SepF-like protein"/>
    <property type="match status" value="1"/>
</dbReference>
<dbReference type="HAMAP" id="MF_01197">
    <property type="entry name" value="SepF"/>
    <property type="match status" value="1"/>
</dbReference>
<dbReference type="InterPro" id="IPR023052">
    <property type="entry name" value="Cell_div_SepF"/>
</dbReference>
<dbReference type="InterPro" id="IPR007561">
    <property type="entry name" value="Cell_div_SepF/SepF-rel"/>
</dbReference>
<dbReference type="InterPro" id="IPR038594">
    <property type="entry name" value="SepF-like_sf"/>
</dbReference>
<dbReference type="PANTHER" id="PTHR35798">
    <property type="entry name" value="CELL DIVISION PROTEIN SEPF"/>
    <property type="match status" value="1"/>
</dbReference>
<dbReference type="PANTHER" id="PTHR35798:SF1">
    <property type="entry name" value="CELL DIVISION PROTEIN SEPF"/>
    <property type="match status" value="1"/>
</dbReference>
<dbReference type="Pfam" id="PF04472">
    <property type="entry name" value="SepF"/>
    <property type="match status" value="1"/>
</dbReference>
<evidence type="ECO:0000255" key="1">
    <source>
        <dbReference type="HAMAP-Rule" id="MF_01197"/>
    </source>
</evidence>
<evidence type="ECO:0000256" key="2">
    <source>
        <dbReference type="SAM" id="MobiDB-lite"/>
    </source>
</evidence>
<proteinExistence type="inferred from homology"/>
<gene>
    <name evidence="1" type="primary">sepF</name>
    <name type="ordered locus">BT9727_3641</name>
</gene>
<feature type="chain" id="PRO_0000333986" description="Cell division protein SepF">
    <location>
        <begin position="1"/>
        <end position="156"/>
    </location>
</feature>
<feature type="region of interest" description="Disordered" evidence="2">
    <location>
        <begin position="23"/>
        <end position="50"/>
    </location>
</feature>
<feature type="compositionally biased region" description="Basic and acidic residues" evidence="2">
    <location>
        <begin position="23"/>
        <end position="36"/>
    </location>
</feature>
<organism>
    <name type="scientific">Bacillus thuringiensis subsp. konkukian (strain 97-27)</name>
    <dbReference type="NCBI Taxonomy" id="281309"/>
    <lineage>
        <taxon>Bacteria</taxon>
        <taxon>Bacillati</taxon>
        <taxon>Bacillota</taxon>
        <taxon>Bacilli</taxon>
        <taxon>Bacillales</taxon>
        <taxon>Bacillaceae</taxon>
        <taxon>Bacillus</taxon>
        <taxon>Bacillus cereus group</taxon>
    </lineage>
</organism>
<accession>Q6HER5</accession>
<reference key="1">
    <citation type="journal article" date="2006" name="J. Bacteriol.">
        <title>Pathogenomic sequence analysis of Bacillus cereus and Bacillus thuringiensis isolates closely related to Bacillus anthracis.</title>
        <authorList>
            <person name="Han C.S."/>
            <person name="Xie G."/>
            <person name="Challacombe J.F."/>
            <person name="Altherr M.R."/>
            <person name="Bhotika S.S."/>
            <person name="Bruce D."/>
            <person name="Campbell C.S."/>
            <person name="Campbell M.L."/>
            <person name="Chen J."/>
            <person name="Chertkov O."/>
            <person name="Cleland C."/>
            <person name="Dimitrijevic M."/>
            <person name="Doggett N.A."/>
            <person name="Fawcett J.J."/>
            <person name="Glavina T."/>
            <person name="Goodwin L.A."/>
            <person name="Hill K.K."/>
            <person name="Hitchcock P."/>
            <person name="Jackson P.J."/>
            <person name="Keim P."/>
            <person name="Kewalramani A.R."/>
            <person name="Longmire J."/>
            <person name="Lucas S."/>
            <person name="Malfatti S."/>
            <person name="McMurry K."/>
            <person name="Meincke L.J."/>
            <person name="Misra M."/>
            <person name="Moseman B.L."/>
            <person name="Mundt M."/>
            <person name="Munk A.C."/>
            <person name="Okinaka R.T."/>
            <person name="Parson-Quintana B."/>
            <person name="Reilly L.P."/>
            <person name="Richardson P."/>
            <person name="Robinson D.L."/>
            <person name="Rubin E."/>
            <person name="Saunders E."/>
            <person name="Tapia R."/>
            <person name="Tesmer J.G."/>
            <person name="Thayer N."/>
            <person name="Thompson L.S."/>
            <person name="Tice H."/>
            <person name="Ticknor L.O."/>
            <person name="Wills P.L."/>
            <person name="Brettin T.S."/>
            <person name="Gilna P."/>
        </authorList>
    </citation>
    <scope>NUCLEOTIDE SEQUENCE [LARGE SCALE GENOMIC DNA]</scope>
    <source>
        <strain>97-27</strain>
    </source>
</reference>
<keyword id="KW-0131">Cell cycle</keyword>
<keyword id="KW-0132">Cell division</keyword>
<keyword id="KW-0963">Cytoplasm</keyword>
<keyword id="KW-0717">Septation</keyword>